<sequence>MSYTLPSLPYAYDALEPHFDKQTMEIHHTKHHQTYVNNANAALENLPEFASLPVEELITKLDQVPADKKTVLRNNAGGHANHSLFWKGLKKGTTLQGDLKAAIERDFGSVDNFKAEFEKAAATRFGSGWAWLVLKGDKLAVVSTANQDSPLMGEAISGASGFPILGLDVWEHAYYLKFQNRRPDYIKEFWNVVNWDEAAARFAAKK</sequence>
<accession>P43019</accession>
<evidence type="ECO:0000250" key="1"/>
<evidence type="ECO:0000305" key="2"/>
<evidence type="ECO:0007829" key="3">
    <source>
        <dbReference type="PDB" id="8KB3"/>
    </source>
</evidence>
<organism>
    <name type="scientific">Salmonella typhimurium (strain LT2 / SGSC1412 / ATCC 700720)</name>
    <dbReference type="NCBI Taxonomy" id="99287"/>
    <lineage>
        <taxon>Bacteria</taxon>
        <taxon>Pseudomonadati</taxon>
        <taxon>Pseudomonadota</taxon>
        <taxon>Gammaproteobacteria</taxon>
        <taxon>Enterobacterales</taxon>
        <taxon>Enterobacteriaceae</taxon>
        <taxon>Salmonella</taxon>
    </lineage>
</organism>
<keyword id="KW-0002">3D-structure</keyword>
<keyword id="KW-0464">Manganese</keyword>
<keyword id="KW-0479">Metal-binding</keyword>
<keyword id="KW-0560">Oxidoreductase</keyword>
<keyword id="KW-1185">Reference proteome</keyword>
<proteinExistence type="evidence at protein level"/>
<protein>
    <recommendedName>
        <fullName>Superoxide dismutase [Mn]</fullName>
        <ecNumber>1.15.1.1</ecNumber>
    </recommendedName>
</protein>
<comment type="function">
    <text>Destroys superoxide anion radicals which are normally produced within the cells and which are toxic to biological systems.</text>
</comment>
<comment type="catalytic activity">
    <reaction>
        <text>2 superoxide + 2 H(+) = H2O2 + O2</text>
        <dbReference type="Rhea" id="RHEA:20696"/>
        <dbReference type="ChEBI" id="CHEBI:15378"/>
        <dbReference type="ChEBI" id="CHEBI:15379"/>
        <dbReference type="ChEBI" id="CHEBI:16240"/>
        <dbReference type="ChEBI" id="CHEBI:18421"/>
        <dbReference type="EC" id="1.15.1.1"/>
    </reaction>
</comment>
<comment type="cofactor">
    <cofactor evidence="1">
        <name>Mn(2+)</name>
        <dbReference type="ChEBI" id="CHEBI:29035"/>
    </cofactor>
    <text evidence="1">Binds 1 Mn(2+) ion per subunit.</text>
</comment>
<comment type="subunit">
    <text evidence="1">Homodimer.</text>
</comment>
<comment type="similarity">
    <text evidence="2">Belongs to the iron/manganese superoxide dismutase family.</text>
</comment>
<reference key="1">
    <citation type="journal article" date="1995" name="Infect. Immun.">
        <title>Role of Salmonella typhimurium Mn-superoxide dismutase (SodA) in protection against early killing by J774 macrophages.</title>
        <authorList>
            <person name="Tsolis R.M."/>
            <person name="Baumler A.J."/>
            <person name="Heffron F."/>
        </authorList>
    </citation>
    <scope>NUCLEOTIDE SEQUENCE [GENOMIC DNA]</scope>
    <source>
        <strain>ATCC 14028 / SGSG 2980 / CDC 6516-60 / NCTC 12023</strain>
    </source>
</reference>
<reference key="2">
    <citation type="journal article" date="2001" name="Nature">
        <title>Complete genome sequence of Salmonella enterica serovar Typhimurium LT2.</title>
        <authorList>
            <person name="McClelland M."/>
            <person name="Sanderson K.E."/>
            <person name="Spieth J."/>
            <person name="Clifton S.W."/>
            <person name="Latreille P."/>
            <person name="Courtney L."/>
            <person name="Porwollik S."/>
            <person name="Ali J."/>
            <person name="Dante M."/>
            <person name="Du F."/>
            <person name="Hou S."/>
            <person name="Layman D."/>
            <person name="Leonard S."/>
            <person name="Nguyen C."/>
            <person name="Scott K."/>
            <person name="Holmes A."/>
            <person name="Grewal N."/>
            <person name="Mulvaney E."/>
            <person name="Ryan E."/>
            <person name="Sun H."/>
            <person name="Florea L."/>
            <person name="Miller W."/>
            <person name="Stoneking T."/>
            <person name="Nhan M."/>
            <person name="Waterston R."/>
            <person name="Wilson R.K."/>
        </authorList>
    </citation>
    <scope>NUCLEOTIDE SEQUENCE [LARGE SCALE GENOMIC DNA]</scope>
    <source>
        <strain>LT2 / SGSC1412 / ATCC 700720</strain>
    </source>
</reference>
<gene>
    <name type="primary">sodA</name>
    <name type="ordered locus">STM4055</name>
</gene>
<name>SODM_SALTY</name>
<dbReference type="EC" id="1.15.1.1"/>
<dbReference type="EMBL" id="U20645">
    <property type="protein sequence ID" value="AAC43331.1"/>
    <property type="molecule type" value="Genomic_DNA"/>
</dbReference>
<dbReference type="EMBL" id="AE006468">
    <property type="protein sequence ID" value="AAL22895.1"/>
    <property type="molecule type" value="Genomic_DNA"/>
</dbReference>
<dbReference type="RefSeq" id="NP_462936.1">
    <property type="nucleotide sequence ID" value="NC_003197.2"/>
</dbReference>
<dbReference type="RefSeq" id="WP_000122635.1">
    <property type="nucleotide sequence ID" value="NC_003197.2"/>
</dbReference>
<dbReference type="PDB" id="8KB3">
    <property type="method" value="X-ray"/>
    <property type="resolution" value="1.62 A"/>
    <property type="chains" value="A/B=1-206"/>
</dbReference>
<dbReference type="PDBsum" id="8KB3"/>
<dbReference type="SMR" id="P43019"/>
<dbReference type="STRING" id="99287.STM4055"/>
<dbReference type="PaxDb" id="99287-STM4055"/>
<dbReference type="GeneID" id="1255582"/>
<dbReference type="KEGG" id="stm:STM4055"/>
<dbReference type="PATRIC" id="fig|99287.12.peg.4275"/>
<dbReference type="HOGENOM" id="CLU_031625_0_1_6"/>
<dbReference type="OMA" id="GSYEGWK"/>
<dbReference type="PhylomeDB" id="P43019"/>
<dbReference type="BioCyc" id="SENT99287:STM4055-MONOMER"/>
<dbReference type="PHI-base" id="PHI:11376"/>
<dbReference type="Proteomes" id="UP000001014">
    <property type="component" value="Chromosome"/>
</dbReference>
<dbReference type="GO" id="GO:0005737">
    <property type="term" value="C:cytoplasm"/>
    <property type="evidence" value="ECO:0000318"/>
    <property type="project" value="GO_Central"/>
</dbReference>
<dbReference type="GO" id="GO:0046872">
    <property type="term" value="F:metal ion binding"/>
    <property type="evidence" value="ECO:0007669"/>
    <property type="project" value="UniProtKB-KW"/>
</dbReference>
<dbReference type="GO" id="GO:0004784">
    <property type="term" value="F:superoxide dismutase activity"/>
    <property type="evidence" value="ECO:0000318"/>
    <property type="project" value="GO_Central"/>
</dbReference>
<dbReference type="GO" id="GO:0019430">
    <property type="term" value="P:removal of superoxide radicals"/>
    <property type="evidence" value="ECO:0000318"/>
    <property type="project" value="GO_Central"/>
</dbReference>
<dbReference type="FunFam" id="1.10.287.990:FF:000001">
    <property type="entry name" value="Superoxide dismutase"/>
    <property type="match status" value="1"/>
</dbReference>
<dbReference type="FunFam" id="3.55.40.20:FF:000001">
    <property type="entry name" value="Superoxide dismutase"/>
    <property type="match status" value="1"/>
</dbReference>
<dbReference type="Gene3D" id="1.10.287.990">
    <property type="entry name" value="Fe,Mn superoxide dismutase (SOD) domain"/>
    <property type="match status" value="1"/>
</dbReference>
<dbReference type="Gene3D" id="3.55.40.20">
    <property type="entry name" value="Iron/manganese superoxide dismutase, C-terminal domain"/>
    <property type="match status" value="1"/>
</dbReference>
<dbReference type="InterPro" id="IPR001189">
    <property type="entry name" value="Mn/Fe_SOD"/>
</dbReference>
<dbReference type="InterPro" id="IPR019833">
    <property type="entry name" value="Mn/Fe_SOD_BS"/>
</dbReference>
<dbReference type="InterPro" id="IPR019832">
    <property type="entry name" value="Mn/Fe_SOD_C"/>
</dbReference>
<dbReference type="InterPro" id="IPR019831">
    <property type="entry name" value="Mn/Fe_SOD_N"/>
</dbReference>
<dbReference type="InterPro" id="IPR036324">
    <property type="entry name" value="Mn/Fe_SOD_N_sf"/>
</dbReference>
<dbReference type="InterPro" id="IPR036314">
    <property type="entry name" value="SOD_C_sf"/>
</dbReference>
<dbReference type="NCBIfam" id="NF008177">
    <property type="entry name" value="PRK10925.1"/>
    <property type="match status" value="1"/>
</dbReference>
<dbReference type="PANTHER" id="PTHR43595">
    <property type="entry name" value="37S RIBOSOMAL PROTEIN S26, MITOCHONDRIAL"/>
    <property type="match status" value="1"/>
</dbReference>
<dbReference type="PANTHER" id="PTHR43595:SF2">
    <property type="entry name" value="SMALL RIBOSOMAL SUBUNIT PROTEIN MS42"/>
    <property type="match status" value="1"/>
</dbReference>
<dbReference type="Pfam" id="PF02777">
    <property type="entry name" value="Sod_Fe_C"/>
    <property type="match status" value="1"/>
</dbReference>
<dbReference type="Pfam" id="PF00081">
    <property type="entry name" value="Sod_Fe_N"/>
    <property type="match status" value="1"/>
</dbReference>
<dbReference type="PIRSF" id="PIRSF000349">
    <property type="entry name" value="SODismutase"/>
    <property type="match status" value="1"/>
</dbReference>
<dbReference type="PRINTS" id="PR01703">
    <property type="entry name" value="MNSODISMTASE"/>
</dbReference>
<dbReference type="SUPFAM" id="SSF54719">
    <property type="entry name" value="Fe,Mn superoxide dismutase (SOD), C-terminal domain"/>
    <property type="match status" value="1"/>
</dbReference>
<dbReference type="SUPFAM" id="SSF46609">
    <property type="entry name" value="Fe,Mn superoxide dismutase (SOD), N-terminal domain"/>
    <property type="match status" value="1"/>
</dbReference>
<dbReference type="PROSITE" id="PS00088">
    <property type="entry name" value="SOD_MN"/>
    <property type="match status" value="1"/>
</dbReference>
<feature type="initiator methionine" description="Removed" evidence="1">
    <location>
        <position position="1"/>
    </location>
</feature>
<feature type="chain" id="PRO_0000160033" description="Superoxide dismutase [Mn]">
    <location>
        <begin position="2"/>
        <end position="206"/>
    </location>
</feature>
<feature type="binding site" evidence="1">
    <location>
        <position position="27"/>
    </location>
    <ligand>
        <name>Mn(2+)</name>
        <dbReference type="ChEBI" id="CHEBI:29035"/>
    </ligand>
</feature>
<feature type="binding site" evidence="1">
    <location>
        <position position="82"/>
    </location>
    <ligand>
        <name>Mn(2+)</name>
        <dbReference type="ChEBI" id="CHEBI:29035"/>
    </ligand>
</feature>
<feature type="binding site" evidence="1">
    <location>
        <position position="168"/>
    </location>
    <ligand>
        <name>Mn(2+)</name>
        <dbReference type="ChEBI" id="CHEBI:29035"/>
    </ligand>
</feature>
<feature type="binding site" evidence="1">
    <location>
        <position position="172"/>
    </location>
    <ligand>
        <name>Mn(2+)</name>
        <dbReference type="ChEBI" id="CHEBI:29035"/>
    </ligand>
</feature>
<feature type="sequence conflict" description="In Ref. 1; AAC43331." evidence="2" ref="1">
    <original>K</original>
    <variation>T</variation>
    <location>
        <position position="91"/>
    </location>
</feature>
<feature type="sequence conflict" description="In Ref. 1." evidence="2" ref="1">
    <original>AK</original>
    <variation>L</variation>
    <location>
        <begin position="204"/>
        <end position="205"/>
    </location>
</feature>
<feature type="turn" evidence="3">
    <location>
        <begin position="12"/>
        <end position="18"/>
    </location>
</feature>
<feature type="helix" evidence="3">
    <location>
        <begin position="21"/>
        <end position="29"/>
    </location>
</feature>
<feature type="helix" evidence="3">
    <location>
        <begin position="31"/>
        <end position="43"/>
    </location>
</feature>
<feature type="helix" evidence="3">
    <location>
        <begin position="47"/>
        <end position="50"/>
    </location>
</feature>
<feature type="helix" evidence="3">
    <location>
        <begin position="54"/>
        <end position="57"/>
    </location>
</feature>
<feature type="helix" evidence="3">
    <location>
        <begin position="61"/>
        <end position="63"/>
    </location>
</feature>
<feature type="helix" evidence="3">
    <location>
        <begin position="66"/>
        <end position="68"/>
    </location>
</feature>
<feature type="helix" evidence="3">
    <location>
        <begin position="69"/>
        <end position="87"/>
    </location>
</feature>
<feature type="helix" evidence="3">
    <location>
        <begin position="97"/>
        <end position="107"/>
    </location>
</feature>
<feature type="helix" evidence="3">
    <location>
        <begin position="110"/>
        <end position="123"/>
    </location>
</feature>
<feature type="strand" evidence="3">
    <location>
        <begin position="126"/>
        <end position="135"/>
    </location>
</feature>
<feature type="strand" evidence="3">
    <location>
        <begin position="138"/>
        <end position="145"/>
    </location>
</feature>
<feature type="helix" evidence="3">
    <location>
        <begin position="150"/>
        <end position="152"/>
    </location>
</feature>
<feature type="helix" evidence="3">
    <location>
        <begin position="154"/>
        <end position="157"/>
    </location>
</feature>
<feature type="strand" evidence="3">
    <location>
        <begin position="161"/>
        <end position="168"/>
    </location>
</feature>
<feature type="helix" evidence="3">
    <location>
        <begin position="171"/>
        <end position="173"/>
    </location>
</feature>
<feature type="helix" evidence="3">
    <location>
        <begin position="175"/>
        <end position="178"/>
    </location>
</feature>
<feature type="helix" evidence="3">
    <location>
        <begin position="182"/>
        <end position="192"/>
    </location>
</feature>
<feature type="helix" evidence="3">
    <location>
        <begin position="195"/>
        <end position="205"/>
    </location>
</feature>